<accession>Q37369</accession>
<gene>
    <name type="primary">MT-CO2</name>
    <name type="synonym">COII</name>
    <name type="synonym">COXII</name>
    <name type="synonym">MTCO2</name>
</gene>
<sequence>MAYPMQLGFQDATSPIMEELLHFHDHTLMIVFLISSLVLYIISLMLTTKLTHTSTMDAQEVETVWTILPAIILILIALPSLRILYMMDEINNPSLTVKTMGHQWYWSYEYTDYEDLSFDSYMIPTSELKPGELRLLEVDNRVVLPMEMTVRMLVSSEDVLHSWAVPSLGLKTDAIPGRLNQATLMSTRPGLYYGQCSEICGSNHSFMPIVLELVPLKHFEEWSASMS</sequence>
<name>COX2_ANTAM</name>
<feature type="chain" id="PRO_0000183495" description="Cytochrome c oxidase subunit 2">
    <location>
        <begin position="1"/>
        <end position="227"/>
    </location>
</feature>
<feature type="topological domain" description="Mitochondrial intermembrane" evidence="3">
    <location>
        <begin position="1"/>
        <end position="14"/>
    </location>
</feature>
<feature type="transmembrane region" description="Helical; Name=I" evidence="3">
    <location>
        <begin position="15"/>
        <end position="45"/>
    </location>
</feature>
<feature type="topological domain" description="Mitochondrial matrix" evidence="3">
    <location>
        <begin position="46"/>
        <end position="59"/>
    </location>
</feature>
<feature type="transmembrane region" description="Helical; Name=II" evidence="3">
    <location>
        <begin position="60"/>
        <end position="87"/>
    </location>
</feature>
<feature type="topological domain" description="Mitochondrial intermembrane" evidence="3">
    <location>
        <begin position="88"/>
        <end position="227"/>
    </location>
</feature>
<feature type="binding site" evidence="3">
    <location>
        <position position="161"/>
    </location>
    <ligand>
        <name>Cu cation</name>
        <dbReference type="ChEBI" id="CHEBI:23378"/>
        <label>A1</label>
    </ligand>
</feature>
<feature type="binding site" evidence="3">
    <location>
        <position position="196"/>
    </location>
    <ligand>
        <name>Cu cation</name>
        <dbReference type="ChEBI" id="CHEBI:23378"/>
        <label>A1</label>
    </ligand>
</feature>
<feature type="binding site" evidence="3">
    <location>
        <position position="196"/>
    </location>
    <ligand>
        <name>Cu cation</name>
        <dbReference type="ChEBI" id="CHEBI:23378"/>
        <label>A2</label>
    </ligand>
</feature>
<feature type="binding site" evidence="3">
    <location>
        <position position="198"/>
    </location>
    <ligand>
        <name>Cu cation</name>
        <dbReference type="ChEBI" id="CHEBI:23378"/>
        <label>A2</label>
    </ligand>
</feature>
<feature type="binding site" evidence="3">
    <location>
        <position position="198"/>
    </location>
    <ligand>
        <name>Mg(2+)</name>
        <dbReference type="ChEBI" id="CHEBI:18420"/>
        <note>ligand shared with MT-CO1</note>
    </ligand>
</feature>
<feature type="binding site" evidence="3">
    <location>
        <position position="200"/>
    </location>
    <ligand>
        <name>Cu cation</name>
        <dbReference type="ChEBI" id="CHEBI:23378"/>
        <label>A1</label>
    </ligand>
</feature>
<feature type="binding site" evidence="3">
    <location>
        <position position="200"/>
    </location>
    <ligand>
        <name>Cu cation</name>
        <dbReference type="ChEBI" id="CHEBI:23378"/>
        <label>A2</label>
    </ligand>
</feature>
<feature type="binding site" evidence="3">
    <location>
        <position position="204"/>
    </location>
    <ligand>
        <name>Cu cation</name>
        <dbReference type="ChEBI" id="CHEBI:23378"/>
        <label>A2</label>
    </ligand>
</feature>
<feature type="binding site" evidence="3">
    <location>
        <position position="207"/>
    </location>
    <ligand>
        <name>Cu cation</name>
        <dbReference type="ChEBI" id="CHEBI:23378"/>
        <label>A1</label>
    </ligand>
</feature>
<evidence type="ECO:0000250" key="1">
    <source>
        <dbReference type="UniProtKB" id="P00403"/>
    </source>
</evidence>
<evidence type="ECO:0000250" key="2">
    <source>
        <dbReference type="UniProtKB" id="P00410"/>
    </source>
</evidence>
<evidence type="ECO:0000250" key="3">
    <source>
        <dbReference type="UniProtKB" id="P68530"/>
    </source>
</evidence>
<evidence type="ECO:0000305" key="4"/>
<organism>
    <name type="scientific">Antilocapra americana</name>
    <name type="common">Pronghorn</name>
    <dbReference type="NCBI Taxonomy" id="9891"/>
    <lineage>
        <taxon>Eukaryota</taxon>
        <taxon>Metazoa</taxon>
        <taxon>Chordata</taxon>
        <taxon>Craniata</taxon>
        <taxon>Vertebrata</taxon>
        <taxon>Euteleostomi</taxon>
        <taxon>Mammalia</taxon>
        <taxon>Eutheria</taxon>
        <taxon>Laurasiatheria</taxon>
        <taxon>Artiodactyla</taxon>
        <taxon>Ruminantia</taxon>
        <taxon>Pecora</taxon>
        <taxon>Antilocapridae</taxon>
        <taxon>Antilocapra</taxon>
    </lineage>
</organism>
<proteinExistence type="inferred from homology"/>
<geneLocation type="mitochondrion"/>
<protein>
    <recommendedName>
        <fullName>Cytochrome c oxidase subunit 2</fullName>
        <ecNumber>7.1.1.9</ecNumber>
    </recommendedName>
    <alternativeName>
        <fullName>Cytochrome c oxidase polypeptide II</fullName>
    </alternativeName>
</protein>
<reference key="1">
    <citation type="submission" date="1996-06" db="EMBL/GenBank/DDBJ databases">
        <authorList>
            <person name="Adkins R.M."/>
            <person name="Honeycutt R.L."/>
            <person name="Janecek L.L."/>
            <person name="Disotell T."/>
        </authorList>
    </citation>
    <scope>NUCLEOTIDE SEQUENCE [GENOMIC DNA]</scope>
</reference>
<keyword id="KW-0186">Copper</keyword>
<keyword id="KW-0249">Electron transport</keyword>
<keyword id="KW-0460">Magnesium</keyword>
<keyword id="KW-0472">Membrane</keyword>
<keyword id="KW-0479">Metal-binding</keyword>
<keyword id="KW-0496">Mitochondrion</keyword>
<keyword id="KW-0999">Mitochondrion inner membrane</keyword>
<keyword id="KW-0679">Respiratory chain</keyword>
<keyword id="KW-1278">Translocase</keyword>
<keyword id="KW-0812">Transmembrane</keyword>
<keyword id="KW-1133">Transmembrane helix</keyword>
<keyword id="KW-0813">Transport</keyword>
<comment type="function">
    <text evidence="2">Component of the cytochrome c oxidase, the last enzyme in the mitochondrial electron transport chain which drives oxidative phosphorylation. The respiratory chain contains 3 multisubunit complexes succinate dehydrogenase (complex II, CII), ubiquinol-cytochrome c oxidoreductase (cytochrome b-c1 complex, complex III, CIII) and cytochrome c oxidase (complex IV, CIV), that cooperate to transfer electrons derived from NADH and succinate to molecular oxygen, creating an electrochemical gradient over the inner membrane that drives transmembrane transport and the ATP synthase. Cytochrome c oxidase is the component of the respiratory chain that catalyzes the reduction of oxygen to water. Electrons originating from reduced cytochrome c in the intermembrane space (IMS) are transferred via the dinuclear copper A center (CU(A)) of subunit 2 and heme A of subunit 1 to the active site in subunit 1, a binuclear center (BNC) formed by heme A3 and copper B (CU(B)). The BNC reduces molecular oxygen to 2 water molecules using 4 electrons from cytochrome c in the IMS and 4 protons from the mitochondrial matrix.</text>
</comment>
<comment type="catalytic activity">
    <reaction evidence="2">
        <text>4 Fe(II)-[cytochrome c] + O2 + 8 H(+)(in) = 4 Fe(III)-[cytochrome c] + 2 H2O + 4 H(+)(out)</text>
        <dbReference type="Rhea" id="RHEA:11436"/>
        <dbReference type="Rhea" id="RHEA-COMP:10350"/>
        <dbReference type="Rhea" id="RHEA-COMP:14399"/>
        <dbReference type="ChEBI" id="CHEBI:15377"/>
        <dbReference type="ChEBI" id="CHEBI:15378"/>
        <dbReference type="ChEBI" id="CHEBI:15379"/>
        <dbReference type="ChEBI" id="CHEBI:29033"/>
        <dbReference type="ChEBI" id="CHEBI:29034"/>
        <dbReference type="EC" id="7.1.1.9"/>
    </reaction>
    <physiologicalReaction direction="left-to-right" evidence="2">
        <dbReference type="Rhea" id="RHEA:11437"/>
    </physiologicalReaction>
</comment>
<comment type="cofactor">
    <cofactor evidence="3">
        <name>Cu cation</name>
        <dbReference type="ChEBI" id="CHEBI:23378"/>
    </cofactor>
    <text evidence="3">Binds a dinuclear copper A center per subunit.</text>
</comment>
<comment type="subunit">
    <text evidence="1 3">Component of the cytochrome c oxidase (complex IV, CIV), a multisubunit enzyme composed of 14 subunits. The complex is composed of a catalytic core of 3 subunits MT-CO1, MT-CO2 and MT-CO3, encoded in the mitochondrial DNA, and 11 supernumerary subunits COX4I, COX5A, COX5B, COX6A, COX6B, COX6C, COX7A, COX7B, COX7C, COX8 and NDUFA4, which are encoded in the nuclear genome. The complex exists as a monomer or a dimer and forms supercomplexes (SCs) in the inner mitochondrial membrane with NADH-ubiquinone oxidoreductase (complex I, CI) and ubiquinol-cytochrome c oxidoreductase (cytochrome b-c1 complex, complex III, CIII), resulting in different assemblies (supercomplex SCI(1)III(2)IV(1) and megacomplex MCI(2)III(2)IV(2)) (By similarity). Found in a complex with TMEM177, COA6, COX18, COX20, SCO1 and SCO2. Interacts with TMEM177 in a COX20-dependent manner. Interacts with COX20. Interacts with COX16 (By similarity).</text>
</comment>
<comment type="subcellular location">
    <subcellularLocation>
        <location evidence="3">Mitochondrion inner membrane</location>
        <topology evidence="3">Multi-pass membrane protein</topology>
    </subcellularLocation>
</comment>
<comment type="similarity">
    <text evidence="4">Belongs to the cytochrome c oxidase subunit 2 family.</text>
</comment>
<dbReference type="EC" id="7.1.1.9"/>
<dbReference type="EMBL" id="U62571">
    <property type="protein sequence ID" value="AAB05776.1"/>
    <property type="molecule type" value="Genomic_DNA"/>
</dbReference>
<dbReference type="SMR" id="Q37369"/>
<dbReference type="GO" id="GO:0005743">
    <property type="term" value="C:mitochondrial inner membrane"/>
    <property type="evidence" value="ECO:0007669"/>
    <property type="project" value="UniProtKB-SubCell"/>
</dbReference>
<dbReference type="GO" id="GO:0045277">
    <property type="term" value="C:respiratory chain complex IV"/>
    <property type="evidence" value="ECO:0000250"/>
    <property type="project" value="UniProtKB"/>
</dbReference>
<dbReference type="GO" id="GO:0005507">
    <property type="term" value="F:copper ion binding"/>
    <property type="evidence" value="ECO:0007669"/>
    <property type="project" value="InterPro"/>
</dbReference>
<dbReference type="GO" id="GO:0004129">
    <property type="term" value="F:cytochrome-c oxidase activity"/>
    <property type="evidence" value="ECO:0007669"/>
    <property type="project" value="UniProtKB-EC"/>
</dbReference>
<dbReference type="GO" id="GO:0042773">
    <property type="term" value="P:ATP synthesis coupled electron transport"/>
    <property type="evidence" value="ECO:0007669"/>
    <property type="project" value="TreeGrafter"/>
</dbReference>
<dbReference type="CDD" id="cd13912">
    <property type="entry name" value="CcO_II_C"/>
    <property type="match status" value="1"/>
</dbReference>
<dbReference type="FunFam" id="1.10.287.90:FF:000001">
    <property type="entry name" value="Cytochrome c oxidase subunit 2"/>
    <property type="match status" value="1"/>
</dbReference>
<dbReference type="FunFam" id="2.60.40.420:FF:000001">
    <property type="entry name" value="Cytochrome c oxidase subunit 2"/>
    <property type="match status" value="1"/>
</dbReference>
<dbReference type="Gene3D" id="1.10.287.90">
    <property type="match status" value="1"/>
</dbReference>
<dbReference type="Gene3D" id="2.60.40.420">
    <property type="entry name" value="Cupredoxins - blue copper proteins"/>
    <property type="match status" value="1"/>
</dbReference>
<dbReference type="InterPro" id="IPR045187">
    <property type="entry name" value="CcO_II"/>
</dbReference>
<dbReference type="InterPro" id="IPR002429">
    <property type="entry name" value="CcO_II-like_C"/>
</dbReference>
<dbReference type="InterPro" id="IPR034210">
    <property type="entry name" value="CcO_II_C"/>
</dbReference>
<dbReference type="InterPro" id="IPR001505">
    <property type="entry name" value="Copper_CuA"/>
</dbReference>
<dbReference type="InterPro" id="IPR008972">
    <property type="entry name" value="Cupredoxin"/>
</dbReference>
<dbReference type="InterPro" id="IPR014222">
    <property type="entry name" value="Cyt_c_oxidase_su2"/>
</dbReference>
<dbReference type="InterPro" id="IPR011759">
    <property type="entry name" value="Cyt_c_oxidase_su2_TM_dom"/>
</dbReference>
<dbReference type="InterPro" id="IPR036257">
    <property type="entry name" value="Cyt_c_oxidase_su2_TM_sf"/>
</dbReference>
<dbReference type="NCBIfam" id="TIGR02866">
    <property type="entry name" value="CoxB"/>
    <property type="match status" value="1"/>
</dbReference>
<dbReference type="PANTHER" id="PTHR22888:SF9">
    <property type="entry name" value="CYTOCHROME C OXIDASE SUBUNIT 2"/>
    <property type="match status" value="1"/>
</dbReference>
<dbReference type="PANTHER" id="PTHR22888">
    <property type="entry name" value="CYTOCHROME C OXIDASE, SUBUNIT II"/>
    <property type="match status" value="1"/>
</dbReference>
<dbReference type="Pfam" id="PF00116">
    <property type="entry name" value="COX2"/>
    <property type="match status" value="1"/>
</dbReference>
<dbReference type="Pfam" id="PF02790">
    <property type="entry name" value="COX2_TM"/>
    <property type="match status" value="1"/>
</dbReference>
<dbReference type="PRINTS" id="PR01166">
    <property type="entry name" value="CYCOXIDASEII"/>
</dbReference>
<dbReference type="SUPFAM" id="SSF49503">
    <property type="entry name" value="Cupredoxins"/>
    <property type="match status" value="1"/>
</dbReference>
<dbReference type="SUPFAM" id="SSF81464">
    <property type="entry name" value="Cytochrome c oxidase subunit II-like, transmembrane region"/>
    <property type="match status" value="1"/>
</dbReference>
<dbReference type="PROSITE" id="PS00078">
    <property type="entry name" value="COX2"/>
    <property type="match status" value="1"/>
</dbReference>
<dbReference type="PROSITE" id="PS50857">
    <property type="entry name" value="COX2_CUA"/>
    <property type="match status" value="1"/>
</dbReference>
<dbReference type="PROSITE" id="PS50999">
    <property type="entry name" value="COX2_TM"/>
    <property type="match status" value="1"/>
</dbReference>